<reference key="1">
    <citation type="journal article" date="1995" name="Plant Physiol.">
        <title>Three cDNAs encoding S-adenosyl-L-methionine synthetase from Actinidia chinensis.</title>
        <authorList>
            <person name="Whittaker D.J."/>
            <person name="Smith G.S."/>
            <person name="Gardner R.C."/>
        </authorList>
    </citation>
    <scope>NUCLEOTIDE SEQUENCE [MRNA]</scope>
    <source>
        <tissue>Fruit</tissue>
    </source>
</reference>
<reference key="2">
    <citation type="journal article" date="2018" name="BMC Genomics">
        <title>A manually annotated Actinidia chinensis var. chinensis (kiwifruit) genome highlights the challenges associated with draft genomes and gene prediction in plants.</title>
        <authorList>
            <person name="Pilkington S.M."/>
            <person name="Crowhurst R."/>
            <person name="Hilario E."/>
            <person name="Nardozza S."/>
            <person name="Fraser L."/>
            <person name="Peng Y."/>
            <person name="Gunaseelan K."/>
            <person name="Simpson R."/>
            <person name="Tahir J."/>
            <person name="Deroles S.C."/>
            <person name="Templeton K."/>
            <person name="Luo Z."/>
            <person name="Davy M."/>
            <person name="Cheng C."/>
            <person name="McNeilage M."/>
            <person name="Scaglione D."/>
            <person name="Liu Y."/>
            <person name="Zhang Q."/>
            <person name="Datson P."/>
            <person name="De Silva N."/>
            <person name="Gardiner S.E."/>
            <person name="Bassett H."/>
            <person name="Chagne D."/>
            <person name="McCallum J."/>
            <person name="Dzierzon H."/>
            <person name="Deng C."/>
            <person name="Wang Y.Y."/>
            <person name="Barron L."/>
            <person name="Manako K."/>
            <person name="Bowen J."/>
            <person name="Foster T.M."/>
            <person name="Erridge Z.A."/>
            <person name="Tiffin H."/>
            <person name="Waite C.N."/>
            <person name="Davies K.M."/>
            <person name="Grierson E.P."/>
            <person name="Laing W.A."/>
            <person name="Kirk R."/>
            <person name="Chen X."/>
            <person name="Wood M."/>
            <person name="Montefiori M."/>
            <person name="Brummell D.A."/>
            <person name="Schwinn K.E."/>
            <person name="Catanach A."/>
            <person name="Fullerton C."/>
            <person name="Li D."/>
            <person name="Meiyalaghan S."/>
            <person name="Nieuwenhuizen N."/>
            <person name="Read N."/>
            <person name="Prakash R."/>
            <person name="Hunter D."/>
            <person name="Zhang H."/>
            <person name="McKenzie M."/>
            <person name="Knabel M."/>
            <person name="Harris A."/>
            <person name="Allan A.C."/>
            <person name="Gleave A."/>
            <person name="Chen A."/>
            <person name="Janssen B.J."/>
            <person name="Plunkett B."/>
            <person name="Ampomah-Dwamena C."/>
            <person name="Voogd C."/>
            <person name="Leif D."/>
            <person name="Lafferty D."/>
            <person name="Souleyre E.J.F."/>
            <person name="Varkonyi-Gasic E."/>
            <person name="Gambi F."/>
            <person name="Hanley J."/>
            <person name="Yao J.L."/>
            <person name="Cheung J."/>
            <person name="David K.M."/>
            <person name="Warren B."/>
            <person name="Marsh K."/>
            <person name="Snowden K.C."/>
            <person name="Lin-Wang K."/>
            <person name="Brian L."/>
            <person name="Martinez-Sanchez M."/>
            <person name="Wang M."/>
            <person name="Ileperuma N."/>
            <person name="Macnee N."/>
            <person name="Campin R."/>
            <person name="McAtee P."/>
            <person name="Drummond R.S.M."/>
            <person name="Espley R.V."/>
            <person name="Ireland H.S."/>
            <person name="Wu R."/>
            <person name="Atkinson R.G."/>
            <person name="Karunairetnam S."/>
            <person name="Bulley S."/>
            <person name="Chunkath S."/>
            <person name="Hanley Z."/>
            <person name="Storey R."/>
            <person name="Thrimawithana A.H."/>
            <person name="Thomson S."/>
            <person name="David C."/>
            <person name="Testolin R."/>
            <person name="Huang H."/>
            <person name="Hellens R.P."/>
            <person name="Schaffer R.J."/>
        </authorList>
    </citation>
    <scope>NUCLEOTIDE SEQUENCE [LARGE SCALE GENOMIC DNA]</scope>
    <source>
        <strain>cv. Red5</strain>
    </source>
</reference>
<comment type="function">
    <text evidence="5">Catalyzes the formation of S-adenosylmethionine from methionine and ATP. The reaction comprises two steps that are both catalyzed by the same enzyme: formation of S-adenosylmethionine (AdoMet) and triphosphate, and subsequent hydrolysis of the triphosphate.</text>
</comment>
<comment type="catalytic activity">
    <reaction evidence="5">
        <text>L-methionine + ATP + H2O = S-adenosyl-L-methionine + phosphate + diphosphate</text>
        <dbReference type="Rhea" id="RHEA:21080"/>
        <dbReference type="ChEBI" id="CHEBI:15377"/>
        <dbReference type="ChEBI" id="CHEBI:30616"/>
        <dbReference type="ChEBI" id="CHEBI:33019"/>
        <dbReference type="ChEBI" id="CHEBI:43474"/>
        <dbReference type="ChEBI" id="CHEBI:57844"/>
        <dbReference type="ChEBI" id="CHEBI:59789"/>
        <dbReference type="EC" id="2.5.1.6"/>
    </reaction>
</comment>
<comment type="cofactor">
    <cofactor evidence="5">
        <name>Mn(2+)</name>
        <dbReference type="ChEBI" id="CHEBI:29035"/>
    </cofactor>
    <cofactor evidence="5">
        <name>Mg(2+)</name>
        <dbReference type="ChEBI" id="CHEBI:18420"/>
    </cofactor>
    <cofactor evidence="5">
        <name>Co(2+)</name>
        <dbReference type="ChEBI" id="CHEBI:48828"/>
    </cofactor>
    <text evidence="3 5">Binds 2 divalent ions per subunit. The metal ions interact primarily with the substrate (By similarity). Can utilize magnesium, manganese or cobalt (in vitro) (By similarity).</text>
</comment>
<comment type="cofactor">
    <cofactor evidence="5">
        <name>K(+)</name>
        <dbReference type="ChEBI" id="CHEBI:29103"/>
    </cofactor>
    <text evidence="3">Binds 1 potassium ion per subunit. The potassium ion interacts primarily with the substrate (By similarity).</text>
</comment>
<comment type="pathway">
    <text evidence="5">Amino-acid biosynthesis; S-adenosyl-L-methionine biosynthesis; S-adenosyl-L-methionine from L-methionine: step 1/1.</text>
</comment>
<comment type="subunit">
    <text evidence="1">Homotetramer.</text>
</comment>
<comment type="subcellular location">
    <subcellularLocation>
        <location evidence="1">Cytoplasm</location>
    </subcellularLocation>
</comment>
<comment type="similarity">
    <text evidence="6">Belongs to the AdoMet synthase family.</text>
</comment>
<dbReference type="EC" id="2.5.1.6" evidence="5"/>
<dbReference type="EMBL" id="U17240">
    <property type="protein sequence ID" value="AAA81378.1"/>
    <property type="molecule type" value="mRNA"/>
</dbReference>
<dbReference type="EMBL" id="NKQK01000018">
    <property type="protein sequence ID" value="PSS04609.1"/>
    <property type="molecule type" value="Genomic_DNA"/>
</dbReference>
<dbReference type="SMR" id="P50301"/>
<dbReference type="FunCoup" id="P50301">
    <property type="interactions" value="3395"/>
</dbReference>
<dbReference type="STRING" id="1590841.P50301"/>
<dbReference type="EnsemblPlants" id="PSS04609">
    <property type="protein sequence ID" value="PSS04609"/>
    <property type="gene ID" value="CEY00_Acc20465"/>
</dbReference>
<dbReference type="Gramene" id="PSS04609">
    <property type="protein sequence ID" value="PSS04609"/>
    <property type="gene ID" value="CEY00_Acc20465"/>
</dbReference>
<dbReference type="InParanoid" id="P50301"/>
<dbReference type="OMA" id="KTCPWVR"/>
<dbReference type="OrthoDB" id="5852090at2759"/>
<dbReference type="UniPathway" id="UPA00315">
    <property type="reaction ID" value="UER00080"/>
</dbReference>
<dbReference type="Proteomes" id="UP000241394">
    <property type="component" value="Chromosome LG18"/>
</dbReference>
<dbReference type="GO" id="GO:0005737">
    <property type="term" value="C:cytoplasm"/>
    <property type="evidence" value="ECO:0007669"/>
    <property type="project" value="UniProtKB-SubCell"/>
</dbReference>
<dbReference type="GO" id="GO:0005524">
    <property type="term" value="F:ATP binding"/>
    <property type="evidence" value="ECO:0007669"/>
    <property type="project" value="UniProtKB-KW"/>
</dbReference>
<dbReference type="GO" id="GO:0046872">
    <property type="term" value="F:metal ion binding"/>
    <property type="evidence" value="ECO:0007669"/>
    <property type="project" value="UniProtKB-KW"/>
</dbReference>
<dbReference type="GO" id="GO:0004478">
    <property type="term" value="F:methionine adenosyltransferase activity"/>
    <property type="evidence" value="ECO:0007669"/>
    <property type="project" value="UniProtKB-EC"/>
</dbReference>
<dbReference type="GO" id="GO:0006730">
    <property type="term" value="P:one-carbon metabolic process"/>
    <property type="evidence" value="ECO:0007669"/>
    <property type="project" value="UniProtKB-KW"/>
</dbReference>
<dbReference type="GO" id="GO:0006556">
    <property type="term" value="P:S-adenosylmethionine biosynthetic process"/>
    <property type="evidence" value="ECO:0007669"/>
    <property type="project" value="UniProtKB-UniPathway"/>
</dbReference>
<dbReference type="CDD" id="cd18079">
    <property type="entry name" value="S-AdoMet_synt"/>
    <property type="match status" value="1"/>
</dbReference>
<dbReference type="FunFam" id="3.30.300.10:FF:000001">
    <property type="entry name" value="S-adenosylmethionine synthase"/>
    <property type="match status" value="1"/>
</dbReference>
<dbReference type="FunFam" id="3.30.300.10:FF:000003">
    <property type="entry name" value="S-adenosylmethionine synthase"/>
    <property type="match status" value="1"/>
</dbReference>
<dbReference type="FunFam" id="3.30.300.10:FF:000004">
    <property type="entry name" value="S-adenosylmethionine synthase"/>
    <property type="match status" value="1"/>
</dbReference>
<dbReference type="Gene3D" id="3.30.300.10">
    <property type="match status" value="3"/>
</dbReference>
<dbReference type="HAMAP" id="MF_00086">
    <property type="entry name" value="S_AdoMet_synth1"/>
    <property type="match status" value="1"/>
</dbReference>
<dbReference type="InterPro" id="IPR022631">
    <property type="entry name" value="ADOMET_SYNTHASE_CS"/>
</dbReference>
<dbReference type="InterPro" id="IPR022630">
    <property type="entry name" value="S-AdoMet_synt_C"/>
</dbReference>
<dbReference type="InterPro" id="IPR022629">
    <property type="entry name" value="S-AdoMet_synt_central"/>
</dbReference>
<dbReference type="InterPro" id="IPR022628">
    <property type="entry name" value="S-AdoMet_synt_N"/>
</dbReference>
<dbReference type="InterPro" id="IPR002133">
    <property type="entry name" value="S-AdoMet_synthetase"/>
</dbReference>
<dbReference type="InterPro" id="IPR022636">
    <property type="entry name" value="S-AdoMet_synthetase_sfam"/>
</dbReference>
<dbReference type="NCBIfam" id="TIGR01034">
    <property type="entry name" value="metK"/>
    <property type="match status" value="1"/>
</dbReference>
<dbReference type="PANTHER" id="PTHR11964">
    <property type="entry name" value="S-ADENOSYLMETHIONINE SYNTHETASE"/>
    <property type="match status" value="1"/>
</dbReference>
<dbReference type="Pfam" id="PF02773">
    <property type="entry name" value="S-AdoMet_synt_C"/>
    <property type="match status" value="1"/>
</dbReference>
<dbReference type="Pfam" id="PF02772">
    <property type="entry name" value="S-AdoMet_synt_M"/>
    <property type="match status" value="1"/>
</dbReference>
<dbReference type="Pfam" id="PF00438">
    <property type="entry name" value="S-AdoMet_synt_N"/>
    <property type="match status" value="1"/>
</dbReference>
<dbReference type="PIRSF" id="PIRSF000497">
    <property type="entry name" value="MAT"/>
    <property type="match status" value="1"/>
</dbReference>
<dbReference type="SUPFAM" id="SSF55973">
    <property type="entry name" value="S-adenosylmethionine synthetase"/>
    <property type="match status" value="3"/>
</dbReference>
<dbReference type="PROSITE" id="PS00376">
    <property type="entry name" value="ADOMET_SYNTHASE_1"/>
    <property type="match status" value="1"/>
</dbReference>
<dbReference type="PROSITE" id="PS00377">
    <property type="entry name" value="ADOMET_SYNTHASE_2"/>
    <property type="match status" value="1"/>
</dbReference>
<feature type="chain" id="PRO_0000174453" description="S-adenosylmethionine synthase 1">
    <location>
        <begin position="1"/>
        <end position="390"/>
    </location>
</feature>
<feature type="binding site" evidence="3">
    <location>
        <position position="9"/>
    </location>
    <ligand>
        <name>Mg(2+)</name>
        <dbReference type="ChEBI" id="CHEBI:18420"/>
    </ligand>
</feature>
<feature type="binding site" description="in other chain" evidence="4">
    <location>
        <position position="15"/>
    </location>
    <ligand>
        <name>ATP</name>
        <dbReference type="ChEBI" id="CHEBI:30616"/>
        <note>ligand shared between two neighboring subunits</note>
    </ligand>
</feature>
<feature type="binding site" evidence="2">
    <location>
        <position position="43"/>
    </location>
    <ligand>
        <name>K(+)</name>
        <dbReference type="ChEBI" id="CHEBI:29103"/>
    </ligand>
</feature>
<feature type="binding site" description="in other chain" evidence="2">
    <location>
        <position position="56"/>
    </location>
    <ligand>
        <name>L-methionine</name>
        <dbReference type="ChEBI" id="CHEBI:57844"/>
        <note>ligand shared between two neighboring subunits</note>
    </ligand>
</feature>
<feature type="binding site" description="in other chain" evidence="2">
    <location>
        <position position="99"/>
    </location>
    <ligand>
        <name>L-methionine</name>
        <dbReference type="ChEBI" id="CHEBI:57844"/>
        <note>ligand shared between two neighboring subunits</note>
    </ligand>
</feature>
<feature type="binding site" description="in other chain" evidence="4">
    <location>
        <begin position="167"/>
        <end position="169"/>
    </location>
    <ligand>
        <name>ATP</name>
        <dbReference type="ChEBI" id="CHEBI:30616"/>
        <note>ligand shared between two neighboring subunits</note>
    </ligand>
</feature>
<feature type="binding site" description="in other chain" evidence="4">
    <location>
        <begin position="235"/>
        <end position="238"/>
    </location>
    <ligand>
        <name>ATP</name>
        <dbReference type="ChEBI" id="CHEBI:30616"/>
        <note>ligand shared between two neighboring subunits</note>
    </ligand>
</feature>
<feature type="binding site" description="in other chain" evidence="4">
    <location>
        <position position="246"/>
    </location>
    <ligand>
        <name>ATP</name>
        <dbReference type="ChEBI" id="CHEBI:30616"/>
        <note>ligand shared between two neighboring subunits</note>
    </ligand>
</feature>
<feature type="binding site" evidence="2">
    <location>
        <position position="246"/>
    </location>
    <ligand>
        <name>L-methionine</name>
        <dbReference type="ChEBI" id="CHEBI:57844"/>
        <note>ligand shared between two neighboring subunits</note>
    </ligand>
</feature>
<feature type="binding site" description="in other chain" evidence="2">
    <location>
        <begin position="252"/>
        <end position="253"/>
    </location>
    <ligand>
        <name>ATP</name>
        <dbReference type="ChEBI" id="CHEBI:30616"/>
        <note>ligand shared between two neighboring subunits</note>
    </ligand>
</feature>
<feature type="binding site" evidence="2">
    <location>
        <position position="269"/>
    </location>
    <ligand>
        <name>ATP</name>
        <dbReference type="ChEBI" id="CHEBI:30616"/>
        <note>ligand shared between two neighboring subunits</note>
    </ligand>
</feature>
<feature type="binding site" evidence="2">
    <location>
        <position position="273"/>
    </location>
    <ligand>
        <name>ATP</name>
        <dbReference type="ChEBI" id="CHEBI:30616"/>
        <note>ligand shared between two neighboring subunits</note>
    </ligand>
</feature>
<feature type="binding site" evidence="3">
    <location>
        <position position="277"/>
    </location>
    <ligand>
        <name>ATP</name>
        <dbReference type="ChEBI" id="CHEBI:30616"/>
        <note>ligand shared between two neighboring subunits</note>
    </ligand>
</feature>
<feature type="binding site" description="in other chain" evidence="2">
    <location>
        <position position="277"/>
    </location>
    <ligand>
        <name>L-methionine</name>
        <dbReference type="ChEBI" id="CHEBI:57844"/>
        <note>ligand shared between two neighboring subunits</note>
    </ligand>
</feature>
<sequence>MDTFLFTSESVNEGHPDKLCDQVSDAILDACLKQDPESKVACESCTKTNMVMVFGEITTKAQVNYEKIVRDTCRGIGFTSPDVGLDADHCKVLVNIEQQSPDIAQGVHGHLTKKPEEIGAGDQGHMFGYATDETPELMPLTHVLATKLGAKLTEVRKNSTCPWLRPDGKTQVTVEYRNEGGAMVPIRVHTVLISTQHDETVTNDQIANDLKKHVIKPVVPAQYLDDNTIFHLNPSGRFVIGGPHGDAGLTGRKIIIDTYGGWGAHGGGAFSGKDPTKVDRSGAYIVRQAAKSVVASGLARRCLVQVSYAIGVAEPLSVFVDTYKTGKIADKDILALIKENFDFRPGMIAINLDLKRGGNLRYQKTAAYGHFGRDDPDFTWETVKILKPKA</sequence>
<gene>
    <name type="primary">SAM1</name>
    <name evidence="7" type="ORF">CEY00_Acc20465</name>
</gene>
<accession>P50301</accession>
<accession>A0A2R6Q9N0</accession>
<name>METK1_ACTCC</name>
<evidence type="ECO:0000250" key="1"/>
<evidence type="ECO:0000250" key="2">
    <source>
        <dbReference type="UniProtKB" id="P0A817"/>
    </source>
</evidence>
<evidence type="ECO:0000250" key="3">
    <source>
        <dbReference type="UniProtKB" id="P13444"/>
    </source>
</evidence>
<evidence type="ECO:0000250" key="4">
    <source>
        <dbReference type="UniProtKB" id="Q00266"/>
    </source>
</evidence>
<evidence type="ECO:0000250" key="5">
    <source>
        <dbReference type="UniProtKB" id="Q96551"/>
    </source>
</evidence>
<evidence type="ECO:0000305" key="6"/>
<evidence type="ECO:0000312" key="7">
    <source>
        <dbReference type="EMBL" id="PSS04609.1"/>
    </source>
</evidence>
<organism>
    <name type="scientific">Actinidia chinensis var. chinensis</name>
    <name type="common">Chinese soft-hair kiwi</name>
    <dbReference type="NCBI Taxonomy" id="1590841"/>
    <lineage>
        <taxon>Eukaryota</taxon>
        <taxon>Viridiplantae</taxon>
        <taxon>Streptophyta</taxon>
        <taxon>Embryophyta</taxon>
        <taxon>Tracheophyta</taxon>
        <taxon>Spermatophyta</taxon>
        <taxon>Magnoliopsida</taxon>
        <taxon>eudicotyledons</taxon>
        <taxon>Gunneridae</taxon>
        <taxon>Pentapetalae</taxon>
        <taxon>asterids</taxon>
        <taxon>Ericales</taxon>
        <taxon>Actinidiaceae</taxon>
        <taxon>Actinidia</taxon>
    </lineage>
</organism>
<proteinExistence type="evidence at transcript level"/>
<protein>
    <recommendedName>
        <fullName>S-adenosylmethionine synthase 1</fullName>
        <shortName>AdoMet synthase 1</shortName>
        <ecNumber evidence="5">2.5.1.6</ecNumber>
    </recommendedName>
    <alternativeName>
        <fullName>Methionine adenosyltransferase 1</fullName>
        <shortName>MAT 1</shortName>
    </alternativeName>
</protein>
<keyword id="KW-0067">ATP-binding</keyword>
<keyword id="KW-0170">Cobalt</keyword>
<keyword id="KW-0963">Cytoplasm</keyword>
<keyword id="KW-0460">Magnesium</keyword>
<keyword id="KW-0479">Metal-binding</keyword>
<keyword id="KW-0547">Nucleotide-binding</keyword>
<keyword id="KW-0554">One-carbon metabolism</keyword>
<keyword id="KW-0630">Potassium</keyword>
<keyword id="KW-1185">Reference proteome</keyword>
<keyword id="KW-0808">Transferase</keyword>